<sequence>VHLTGEEKAAVTSLWGKVNVDEVGGEALGRLLVVYPWTQRFFDSFGDLSSPDAVMGNPKVKAHGKKVLNSFSEGLKNLDNLKGTFAKLSELHCDKLHVDPENFKLLGNVLVCVLAHHFGKEFTPQVQAAYQKVVAGVANALAHKYH</sequence>
<keyword id="KW-0007">Acetylation</keyword>
<keyword id="KW-0903">Direct protein sequencing</keyword>
<keyword id="KW-0349">Heme</keyword>
<keyword id="KW-0408">Iron</keyword>
<keyword id="KW-0479">Metal-binding</keyword>
<keyword id="KW-0561">Oxygen transport</keyword>
<keyword id="KW-0597">Phosphoprotein</keyword>
<keyword id="KW-0702">S-nitrosylation</keyword>
<keyword id="KW-0813">Transport</keyword>
<dbReference type="PIR" id="S00817">
    <property type="entry name" value="HBOTE"/>
</dbReference>
<dbReference type="SMR" id="P10893"/>
<dbReference type="GO" id="GO:0072562">
    <property type="term" value="C:blood microparticle"/>
    <property type="evidence" value="ECO:0007669"/>
    <property type="project" value="TreeGrafter"/>
</dbReference>
<dbReference type="GO" id="GO:0031838">
    <property type="term" value="C:haptoglobin-hemoglobin complex"/>
    <property type="evidence" value="ECO:0007669"/>
    <property type="project" value="TreeGrafter"/>
</dbReference>
<dbReference type="GO" id="GO:0005833">
    <property type="term" value="C:hemoglobin complex"/>
    <property type="evidence" value="ECO:0007669"/>
    <property type="project" value="InterPro"/>
</dbReference>
<dbReference type="GO" id="GO:0031720">
    <property type="term" value="F:haptoglobin binding"/>
    <property type="evidence" value="ECO:0007669"/>
    <property type="project" value="TreeGrafter"/>
</dbReference>
<dbReference type="GO" id="GO:0020037">
    <property type="term" value="F:heme binding"/>
    <property type="evidence" value="ECO:0007669"/>
    <property type="project" value="InterPro"/>
</dbReference>
<dbReference type="GO" id="GO:0031721">
    <property type="term" value="F:hemoglobin alpha binding"/>
    <property type="evidence" value="ECO:0007669"/>
    <property type="project" value="TreeGrafter"/>
</dbReference>
<dbReference type="GO" id="GO:0046872">
    <property type="term" value="F:metal ion binding"/>
    <property type="evidence" value="ECO:0007669"/>
    <property type="project" value="UniProtKB-KW"/>
</dbReference>
<dbReference type="GO" id="GO:0043177">
    <property type="term" value="F:organic acid binding"/>
    <property type="evidence" value="ECO:0007669"/>
    <property type="project" value="TreeGrafter"/>
</dbReference>
<dbReference type="GO" id="GO:0019825">
    <property type="term" value="F:oxygen binding"/>
    <property type="evidence" value="ECO:0007669"/>
    <property type="project" value="InterPro"/>
</dbReference>
<dbReference type="GO" id="GO:0005344">
    <property type="term" value="F:oxygen carrier activity"/>
    <property type="evidence" value="ECO:0007669"/>
    <property type="project" value="UniProtKB-KW"/>
</dbReference>
<dbReference type="GO" id="GO:0004601">
    <property type="term" value="F:peroxidase activity"/>
    <property type="evidence" value="ECO:0007669"/>
    <property type="project" value="TreeGrafter"/>
</dbReference>
<dbReference type="GO" id="GO:0042744">
    <property type="term" value="P:hydrogen peroxide catabolic process"/>
    <property type="evidence" value="ECO:0007669"/>
    <property type="project" value="TreeGrafter"/>
</dbReference>
<dbReference type="CDD" id="cd08925">
    <property type="entry name" value="Hb-beta-like"/>
    <property type="match status" value="1"/>
</dbReference>
<dbReference type="FunFam" id="1.10.490.10:FF:000001">
    <property type="entry name" value="Hemoglobin subunit beta"/>
    <property type="match status" value="1"/>
</dbReference>
<dbReference type="Gene3D" id="1.10.490.10">
    <property type="entry name" value="Globins"/>
    <property type="match status" value="1"/>
</dbReference>
<dbReference type="InterPro" id="IPR000971">
    <property type="entry name" value="Globin"/>
</dbReference>
<dbReference type="InterPro" id="IPR009050">
    <property type="entry name" value="Globin-like_sf"/>
</dbReference>
<dbReference type="InterPro" id="IPR012292">
    <property type="entry name" value="Globin/Proto"/>
</dbReference>
<dbReference type="InterPro" id="IPR002337">
    <property type="entry name" value="Hemoglobin_b"/>
</dbReference>
<dbReference type="InterPro" id="IPR050056">
    <property type="entry name" value="Hemoglobin_oxygen_transport"/>
</dbReference>
<dbReference type="PANTHER" id="PTHR11442">
    <property type="entry name" value="HEMOGLOBIN FAMILY MEMBER"/>
    <property type="match status" value="1"/>
</dbReference>
<dbReference type="PANTHER" id="PTHR11442:SF42">
    <property type="entry name" value="HEMOGLOBIN SUBUNIT BETA"/>
    <property type="match status" value="1"/>
</dbReference>
<dbReference type="Pfam" id="PF00042">
    <property type="entry name" value="Globin"/>
    <property type="match status" value="1"/>
</dbReference>
<dbReference type="PRINTS" id="PR00814">
    <property type="entry name" value="BETAHAEM"/>
</dbReference>
<dbReference type="SUPFAM" id="SSF46458">
    <property type="entry name" value="Globin-like"/>
    <property type="match status" value="1"/>
</dbReference>
<dbReference type="PROSITE" id="PS01033">
    <property type="entry name" value="GLOBIN"/>
    <property type="match status" value="1"/>
</dbReference>
<evidence type="ECO:0000250" key="1">
    <source>
        <dbReference type="UniProtKB" id="P02086"/>
    </source>
</evidence>
<evidence type="ECO:0000250" key="2">
    <source>
        <dbReference type="UniProtKB" id="P68871"/>
    </source>
</evidence>
<evidence type="ECO:0000255" key="3">
    <source>
        <dbReference type="PROSITE-ProRule" id="PRU00238"/>
    </source>
</evidence>
<gene>
    <name type="primary">HBB</name>
</gene>
<protein>
    <recommendedName>
        <fullName>Hemoglobin subunit beta</fullName>
    </recommendedName>
    <alternativeName>
        <fullName>Beta-globin</fullName>
    </alternativeName>
    <alternativeName>
        <fullName>Hemoglobin beta chain</fullName>
    </alternativeName>
</protein>
<organism>
    <name type="scientific">Lutra lutra</name>
    <name type="common">European river otter</name>
    <dbReference type="NCBI Taxonomy" id="9657"/>
    <lineage>
        <taxon>Eukaryota</taxon>
        <taxon>Metazoa</taxon>
        <taxon>Chordata</taxon>
        <taxon>Craniata</taxon>
        <taxon>Vertebrata</taxon>
        <taxon>Euteleostomi</taxon>
        <taxon>Mammalia</taxon>
        <taxon>Eutheria</taxon>
        <taxon>Laurasiatheria</taxon>
        <taxon>Carnivora</taxon>
        <taxon>Caniformia</taxon>
        <taxon>Musteloidea</taxon>
        <taxon>Mustelidae</taxon>
        <taxon>Lutrinae</taxon>
        <taxon>Lutra</taxon>
    </lineage>
</organism>
<comment type="function">
    <text>Involved in oxygen transport from the lung to the various peripheral tissues.</text>
</comment>
<comment type="subunit">
    <text>Heterotetramer of two alpha chains and two beta chains.</text>
</comment>
<comment type="tissue specificity">
    <text>Red blood cells.</text>
</comment>
<comment type="similarity">
    <text evidence="3">Belongs to the globin family.</text>
</comment>
<proteinExistence type="evidence at protein level"/>
<feature type="chain" id="PRO_0000052996" description="Hemoglobin subunit beta">
    <location>
        <begin position="1"/>
        <end position="146"/>
    </location>
</feature>
<feature type="domain" description="Globin" evidence="3">
    <location>
        <begin position="2"/>
        <end position="146"/>
    </location>
</feature>
<feature type="binding site" description="distal binding residue">
    <location>
        <position position="63"/>
    </location>
    <ligand>
        <name>heme b</name>
        <dbReference type="ChEBI" id="CHEBI:60344"/>
    </ligand>
    <ligandPart>
        <name>Fe</name>
        <dbReference type="ChEBI" id="CHEBI:18248"/>
    </ligandPart>
</feature>
<feature type="binding site" description="proximal binding residue">
    <location>
        <position position="92"/>
    </location>
    <ligand>
        <name>heme b</name>
        <dbReference type="ChEBI" id="CHEBI:60344"/>
    </ligand>
    <ligandPart>
        <name>Fe</name>
        <dbReference type="ChEBI" id="CHEBI:18248"/>
    </ligandPart>
</feature>
<feature type="modified residue" description="N-acetylvaline" evidence="1">
    <location>
        <position position="1"/>
    </location>
</feature>
<feature type="modified residue" description="Phosphothreonine" evidence="2">
    <location>
        <position position="12"/>
    </location>
</feature>
<feature type="modified residue" description="Phosphoserine" evidence="2">
    <location>
        <position position="44"/>
    </location>
</feature>
<feature type="modified residue" description="N6-acetyllysine" evidence="2">
    <location>
        <position position="59"/>
    </location>
</feature>
<feature type="modified residue" description="N6-acetyllysine" evidence="2">
    <location>
        <position position="82"/>
    </location>
</feature>
<feature type="modified residue" description="S-nitrosocysteine" evidence="2">
    <location>
        <position position="93"/>
    </location>
</feature>
<feature type="modified residue" description="N6-acetyllysine" evidence="2">
    <location>
        <position position="144"/>
    </location>
</feature>
<reference key="1">
    <citation type="journal article" date="1988" name="Biol. Chem. Hoppe-Seyler">
        <title>Carnivora: the primary structure of the common otter (Lutra lutra, Mustelidae) hemoglobin.</title>
        <authorList>
            <person name="Lin H.-X."/>
            <person name="Kleinschmidt T."/>
            <person name="Braunitzer G."/>
            <person name="Scheil H.-G."/>
        </authorList>
    </citation>
    <scope>PROTEIN SEQUENCE</scope>
</reference>
<name>HBB_LUTLU</name>
<accession>P10893</accession>